<sequence length="676" mass="77575">MEKNLPDIFFFPNCVNVFSYKYSQDEFSNMSNMERDSFSLAVFPVIKHRWHNAHVVKHKGIYKVSTEAHGKKVSPPSLGKPSHINLTAKQYIYSEHTISFECYSFLKCITNAEINSFDEYILRGLLEAGNSLQIFSNSVGKRTDTIGVLGNKYPFSKIPLASLTPKAQREIFSAWISHRPVVLTGGTGVGKTSQVPKLLLWFNYLFGGFSTLDKITDFHERPVILSLPRIALVRLHSNTILKSLGFKVLDGSPISLRYGSIPEELINKQPKKYGIVFSTHKLSLTKLFSYGTLIIDEVHEHDQIGDIIIAVARKHHTKIDSMFLMTATLEDDRERLKVFLPNPAFIHIPGDTLFKISEVFIHNKINPSSRMAYIEEEKRNLVTAIQMYTPPDGSSGIVFVASVAQCHEYKSYLEKRLPYDMYIIHGKVLEIDKILEKVYSSPNVSIIISTPYLESSVTIHNVTHIYDMGRVFVPAPFGGSQQFISKSMRDQRKGRVGRVNPGTYVYFYDLSYMKSIQRINSEFLHNYILYANKFNLTLPEDLFIIPTNLDILWRTKEYIDSFDISTETWNKLLSNYYMKMIEYAKLYVLSPILAEELDNFERTGELTSIVQEAILSLNLRIKILNFKHKDNDTYIHFCKILFGVYNGTNATIYYHRPLTGYMNMISDTIFVPVDNN</sequence>
<evidence type="ECO:0000250" key="1">
    <source>
        <dbReference type="UniProtKB" id="P12927"/>
    </source>
</evidence>
<evidence type="ECO:0000255" key="2">
    <source>
        <dbReference type="PROSITE-ProRule" id="PRU00541"/>
    </source>
</evidence>
<evidence type="ECO:0000255" key="3">
    <source>
        <dbReference type="PROSITE-ProRule" id="PRU00542"/>
    </source>
</evidence>
<evidence type="ECO:0000305" key="4"/>
<accession>P0DSU6</accession>
<accession>P33051</accession>
<accession>Q85378</accession>
<accession>Q89208</accession>
<accession>Q9QNJ4</accession>
<reference key="1">
    <citation type="journal article" date="1993" name="Nature">
        <title>Potential virulence determinants in terminal regions of variola smallpox virus genome.</title>
        <authorList>
            <person name="Massung R.F."/>
            <person name="Esposito J.J."/>
            <person name="Liu L.I."/>
            <person name="Qi J."/>
            <person name="Utterback T.R."/>
            <person name="Knight J.C."/>
            <person name="Aubin L."/>
            <person name="Yuran T.E."/>
            <person name="Parsons J.M."/>
            <person name="Loparev V.N."/>
            <person name="Selivanov N.A."/>
            <person name="Cavallaro K.F."/>
            <person name="Kerlavage A.R."/>
            <person name="Mahy B.W.J."/>
            <person name="Venter J.C."/>
        </authorList>
    </citation>
    <scope>NUCLEOTIDE SEQUENCE [GENOMIC DNA]</scope>
    <source>
        <strain>Bangladesh-1975</strain>
    </source>
</reference>
<reference key="2">
    <citation type="journal article" date="2000" name="Virology">
        <title>Alastrim smallpox variola minor virus genome DNA sequences.</title>
        <authorList>
            <person name="Shchelkunov S.N."/>
            <person name="Totmenin A.V."/>
            <person name="Loparev V.N."/>
            <person name="Safronov P.F."/>
            <person name="Gutorov V.V."/>
            <person name="Chizhikov V.E."/>
            <person name="Knight J.C."/>
            <person name="Parsons J.M."/>
            <person name="Massung R.F."/>
            <person name="Esposito J.J."/>
        </authorList>
    </citation>
    <scope>NUCLEOTIDE SEQUENCE [LARGE SCALE GENOMIC DNA]</scope>
    <source>
        <strain>Garcia-1966</strain>
    </source>
</reference>
<comment type="function">
    <text evidence="1">NTP-dependent helicase that catalyzes unidirectional unwinding of 3'tailed duplex RNAs and plays an important role during transcription of early mRNAs, presumably by preventing R-loop formation behind the elongating RNA polymerase. Might also play a role in the export of newly synthesized mRNA chains out of the core into the cytoplasm. Required for replication and propagation of viral particles.</text>
</comment>
<comment type="catalytic activity">
    <reaction evidence="1">
        <text>ATP + H2O = ADP + phosphate + H(+)</text>
        <dbReference type="Rhea" id="RHEA:13065"/>
        <dbReference type="ChEBI" id="CHEBI:15377"/>
        <dbReference type="ChEBI" id="CHEBI:15378"/>
        <dbReference type="ChEBI" id="CHEBI:30616"/>
        <dbReference type="ChEBI" id="CHEBI:43474"/>
        <dbReference type="ChEBI" id="CHEBI:456216"/>
        <dbReference type="EC" id="3.6.4.13"/>
    </reaction>
</comment>
<comment type="subunit">
    <text evidence="1">Monomer.</text>
</comment>
<comment type="subcellular location">
    <subcellularLocation>
        <location evidence="1">Virion</location>
    </subcellularLocation>
    <text evidence="1">Localizes to the virion core.</text>
</comment>
<comment type="induction">
    <text>Expressed both early and late in the viral replicative cycle.</text>
</comment>
<comment type="similarity">
    <text evidence="4">Belongs to the DEAD box helicase family. DEAH subfamily.</text>
</comment>
<gene>
    <name type="primary">OPG084</name>
    <name type="synonym">NPH2</name>
    <name type="ORF">I8R</name>
</gene>
<keyword id="KW-0067">ATP-binding</keyword>
<keyword id="KW-0244">Early protein</keyword>
<keyword id="KW-0347">Helicase</keyword>
<keyword id="KW-0378">Hydrolase</keyword>
<keyword id="KW-0426">Late protein</keyword>
<keyword id="KW-0547">Nucleotide-binding</keyword>
<keyword id="KW-0804">Transcription</keyword>
<keyword id="KW-0946">Virion</keyword>
<protein>
    <recommendedName>
        <fullName>RNA helicase NPH-II</fullName>
        <ecNumber>3.6.4.13</ecNumber>
    </recommendedName>
    <alternativeName>
        <fullName>Nucleoside triphosphatase II</fullName>
        <shortName>NTPase II</shortName>
    </alternativeName>
    <alternativeName>
        <fullName>Nucleoside triphosphate phosphohydrolase II</fullName>
        <shortName>NPH II</shortName>
    </alternativeName>
    <alternativeName>
        <fullName>RNA helicase I8</fullName>
    </alternativeName>
</protein>
<organismHost>
    <name type="scientific">Homo sapiens</name>
    <name type="common">Human</name>
    <dbReference type="NCBI Taxonomy" id="9606"/>
</organismHost>
<dbReference type="EC" id="3.6.4.13"/>
<dbReference type="EMBL" id="L22579">
    <property type="protein sequence ID" value="AAA60810.1"/>
    <property type="molecule type" value="Genomic_DNA"/>
</dbReference>
<dbReference type="EMBL" id="Y16780">
    <property type="protein sequence ID" value="CAB54662.1"/>
    <property type="molecule type" value="Genomic_DNA"/>
</dbReference>
<dbReference type="EMBL" id="X76267">
    <property type="protein sequence ID" value="CAA53867.1"/>
    <property type="molecule type" value="Genomic_DNA"/>
</dbReference>
<dbReference type="PIR" id="D72158">
    <property type="entry name" value="D72158"/>
</dbReference>
<dbReference type="PIR" id="T28500">
    <property type="entry name" value="T28500"/>
</dbReference>
<dbReference type="SMR" id="P0DSU6"/>
<dbReference type="Proteomes" id="UP000111493">
    <property type="component" value="Segment"/>
</dbReference>
<dbReference type="Proteomes" id="UP000119805">
    <property type="component" value="Segment"/>
</dbReference>
<dbReference type="GO" id="GO:0044423">
    <property type="term" value="C:virion component"/>
    <property type="evidence" value="ECO:0007669"/>
    <property type="project" value="UniProtKB-KW"/>
</dbReference>
<dbReference type="GO" id="GO:0005524">
    <property type="term" value="F:ATP binding"/>
    <property type="evidence" value="ECO:0007669"/>
    <property type="project" value="UniProtKB-KW"/>
</dbReference>
<dbReference type="GO" id="GO:0016887">
    <property type="term" value="F:ATP hydrolysis activity"/>
    <property type="evidence" value="ECO:0007669"/>
    <property type="project" value="RHEA"/>
</dbReference>
<dbReference type="GO" id="GO:0003723">
    <property type="term" value="F:RNA binding"/>
    <property type="evidence" value="ECO:0007669"/>
    <property type="project" value="TreeGrafter"/>
</dbReference>
<dbReference type="GO" id="GO:0003724">
    <property type="term" value="F:RNA helicase activity"/>
    <property type="evidence" value="ECO:0007669"/>
    <property type="project" value="UniProtKB-EC"/>
</dbReference>
<dbReference type="Gene3D" id="3.40.50.300">
    <property type="entry name" value="P-loop containing nucleotide triphosphate hydrolases"/>
    <property type="match status" value="2"/>
</dbReference>
<dbReference type="InterPro" id="IPR011545">
    <property type="entry name" value="DEAD/DEAH_box_helicase_dom"/>
</dbReference>
<dbReference type="InterPro" id="IPR002464">
    <property type="entry name" value="DNA/RNA_helicase_DEAH_CS"/>
</dbReference>
<dbReference type="InterPro" id="IPR014001">
    <property type="entry name" value="Helicase_ATP-bd"/>
</dbReference>
<dbReference type="InterPro" id="IPR001650">
    <property type="entry name" value="Helicase_C-like"/>
</dbReference>
<dbReference type="InterPro" id="IPR021892">
    <property type="entry name" value="NPH-II"/>
</dbReference>
<dbReference type="InterPro" id="IPR027417">
    <property type="entry name" value="P-loop_NTPase"/>
</dbReference>
<dbReference type="PANTHER" id="PTHR18934">
    <property type="entry name" value="ATP-DEPENDENT RNA HELICASE"/>
    <property type="match status" value="1"/>
</dbReference>
<dbReference type="PANTHER" id="PTHR18934:SF99">
    <property type="entry name" value="ATP-DEPENDENT RNA HELICASE DHX37-RELATED"/>
    <property type="match status" value="1"/>
</dbReference>
<dbReference type="Pfam" id="PF00270">
    <property type="entry name" value="DEAD"/>
    <property type="match status" value="1"/>
</dbReference>
<dbReference type="Pfam" id="PF00271">
    <property type="entry name" value="Helicase_C"/>
    <property type="match status" value="1"/>
</dbReference>
<dbReference type="Pfam" id="PF12011">
    <property type="entry name" value="NPH-II"/>
    <property type="match status" value="1"/>
</dbReference>
<dbReference type="SMART" id="SM00487">
    <property type="entry name" value="DEXDc"/>
    <property type="match status" value="1"/>
</dbReference>
<dbReference type="SMART" id="SM00490">
    <property type="entry name" value="HELICc"/>
    <property type="match status" value="1"/>
</dbReference>
<dbReference type="SUPFAM" id="SSF52540">
    <property type="entry name" value="P-loop containing nucleoside triphosphate hydrolases"/>
    <property type="match status" value="1"/>
</dbReference>
<dbReference type="PROSITE" id="PS00690">
    <property type="entry name" value="DEAH_ATP_HELICASE"/>
    <property type="match status" value="1"/>
</dbReference>
<dbReference type="PROSITE" id="PS51192">
    <property type="entry name" value="HELICASE_ATP_BIND_1"/>
    <property type="match status" value="1"/>
</dbReference>
<dbReference type="PROSITE" id="PS51194">
    <property type="entry name" value="HELICASE_CTER"/>
    <property type="match status" value="1"/>
</dbReference>
<proteinExistence type="evidence at transcript level"/>
<feature type="chain" id="PRO_0000448121" description="RNA helicase NPH-II">
    <location>
        <begin position="1"/>
        <end position="676"/>
    </location>
</feature>
<feature type="domain" description="Helicase ATP-binding" evidence="2">
    <location>
        <begin position="172"/>
        <end position="347"/>
    </location>
</feature>
<feature type="domain" description="Helicase C-terminal" evidence="3">
    <location>
        <begin position="366"/>
        <end position="542"/>
    </location>
</feature>
<feature type="short sequence motif" description="DEXH box">
    <location>
        <begin position="296"/>
        <end position="299"/>
    </location>
</feature>
<feature type="binding site" evidence="2">
    <location>
        <begin position="185"/>
        <end position="192"/>
    </location>
    <ligand>
        <name>ATP</name>
        <dbReference type="ChEBI" id="CHEBI:30616"/>
    </ligand>
</feature>
<feature type="sequence variant" description="In strain: Garcia-1966.">
    <original>M</original>
    <variation>T</variation>
    <location>
        <position position="33"/>
    </location>
</feature>
<feature type="sequence variant" description="In strain: Garcia-1966.">
    <original>G</original>
    <variation>A</variation>
    <location>
        <position position="147"/>
    </location>
</feature>
<feature type="sequence variant" description="In strain: Garcia-1966.">
    <original>E</original>
    <variation>K</variation>
    <location>
        <position position="595"/>
    </location>
</feature>
<feature type="sequence variant" description="In strain: Garcia-1966.">
    <original>D</original>
    <variation>DNDNDND</variation>
    <location>
        <position position="632"/>
    </location>
</feature>
<name>NPH2_VARV</name>
<organism>
    <name type="scientific">Variola virus</name>
    <dbReference type="NCBI Taxonomy" id="10255"/>
    <lineage>
        <taxon>Viruses</taxon>
        <taxon>Varidnaviria</taxon>
        <taxon>Bamfordvirae</taxon>
        <taxon>Nucleocytoviricota</taxon>
        <taxon>Pokkesviricetes</taxon>
        <taxon>Chitovirales</taxon>
        <taxon>Poxviridae</taxon>
        <taxon>Chordopoxvirinae</taxon>
        <taxon>Orthopoxvirus</taxon>
    </lineage>
</organism>